<dbReference type="EMBL" id="CP000721">
    <property type="protein sequence ID" value="ABR32338.1"/>
    <property type="molecule type" value="Genomic_DNA"/>
</dbReference>
<dbReference type="RefSeq" id="WP_011967510.1">
    <property type="nucleotide sequence ID" value="NC_009617.1"/>
</dbReference>
<dbReference type="SMR" id="A6LPQ8"/>
<dbReference type="KEGG" id="cbe:Cbei_0148"/>
<dbReference type="eggNOG" id="COG0480">
    <property type="taxonomic scope" value="Bacteria"/>
</dbReference>
<dbReference type="HOGENOM" id="CLU_002794_4_1_9"/>
<dbReference type="Proteomes" id="UP000000565">
    <property type="component" value="Chromosome"/>
</dbReference>
<dbReference type="GO" id="GO:0005737">
    <property type="term" value="C:cytoplasm"/>
    <property type="evidence" value="ECO:0007669"/>
    <property type="project" value="UniProtKB-SubCell"/>
</dbReference>
<dbReference type="GO" id="GO:0005525">
    <property type="term" value="F:GTP binding"/>
    <property type="evidence" value="ECO:0007669"/>
    <property type="project" value="UniProtKB-UniRule"/>
</dbReference>
<dbReference type="GO" id="GO:0003924">
    <property type="term" value="F:GTPase activity"/>
    <property type="evidence" value="ECO:0007669"/>
    <property type="project" value="InterPro"/>
</dbReference>
<dbReference type="GO" id="GO:0003746">
    <property type="term" value="F:translation elongation factor activity"/>
    <property type="evidence" value="ECO:0007669"/>
    <property type="project" value="UniProtKB-UniRule"/>
</dbReference>
<dbReference type="GO" id="GO:0032790">
    <property type="term" value="P:ribosome disassembly"/>
    <property type="evidence" value="ECO:0007669"/>
    <property type="project" value="TreeGrafter"/>
</dbReference>
<dbReference type="CDD" id="cd01886">
    <property type="entry name" value="EF-G"/>
    <property type="match status" value="1"/>
</dbReference>
<dbReference type="CDD" id="cd16262">
    <property type="entry name" value="EFG_III"/>
    <property type="match status" value="1"/>
</dbReference>
<dbReference type="CDD" id="cd01434">
    <property type="entry name" value="EFG_mtEFG1_IV"/>
    <property type="match status" value="1"/>
</dbReference>
<dbReference type="CDD" id="cd03713">
    <property type="entry name" value="EFG_mtEFG_C"/>
    <property type="match status" value="1"/>
</dbReference>
<dbReference type="CDD" id="cd04088">
    <property type="entry name" value="EFG_mtEFG_II"/>
    <property type="match status" value="1"/>
</dbReference>
<dbReference type="FunFam" id="2.40.30.10:FF:000006">
    <property type="entry name" value="Elongation factor G"/>
    <property type="match status" value="1"/>
</dbReference>
<dbReference type="FunFam" id="3.30.230.10:FF:000003">
    <property type="entry name" value="Elongation factor G"/>
    <property type="match status" value="1"/>
</dbReference>
<dbReference type="FunFam" id="3.30.70.240:FF:000001">
    <property type="entry name" value="Elongation factor G"/>
    <property type="match status" value="1"/>
</dbReference>
<dbReference type="FunFam" id="3.30.70.870:FF:000001">
    <property type="entry name" value="Elongation factor G"/>
    <property type="match status" value="1"/>
</dbReference>
<dbReference type="FunFam" id="3.40.50.300:FF:000029">
    <property type="entry name" value="Elongation factor G"/>
    <property type="match status" value="1"/>
</dbReference>
<dbReference type="Gene3D" id="3.30.230.10">
    <property type="match status" value="1"/>
</dbReference>
<dbReference type="Gene3D" id="3.30.70.240">
    <property type="match status" value="1"/>
</dbReference>
<dbReference type="Gene3D" id="3.30.70.870">
    <property type="entry name" value="Elongation Factor G (Translational Gtpase), domain 3"/>
    <property type="match status" value="1"/>
</dbReference>
<dbReference type="Gene3D" id="3.40.50.300">
    <property type="entry name" value="P-loop containing nucleotide triphosphate hydrolases"/>
    <property type="match status" value="1"/>
</dbReference>
<dbReference type="Gene3D" id="2.40.30.10">
    <property type="entry name" value="Translation factors"/>
    <property type="match status" value="1"/>
</dbReference>
<dbReference type="HAMAP" id="MF_00054_B">
    <property type="entry name" value="EF_G_EF_2_B"/>
    <property type="match status" value="1"/>
</dbReference>
<dbReference type="InterPro" id="IPR053905">
    <property type="entry name" value="EF-G-like_DII"/>
</dbReference>
<dbReference type="InterPro" id="IPR041095">
    <property type="entry name" value="EFG_II"/>
</dbReference>
<dbReference type="InterPro" id="IPR009022">
    <property type="entry name" value="EFG_III"/>
</dbReference>
<dbReference type="InterPro" id="IPR035647">
    <property type="entry name" value="EFG_III/V"/>
</dbReference>
<dbReference type="InterPro" id="IPR047872">
    <property type="entry name" value="EFG_IV"/>
</dbReference>
<dbReference type="InterPro" id="IPR035649">
    <property type="entry name" value="EFG_V"/>
</dbReference>
<dbReference type="InterPro" id="IPR000640">
    <property type="entry name" value="EFG_V-like"/>
</dbReference>
<dbReference type="InterPro" id="IPR031157">
    <property type="entry name" value="G_TR_CS"/>
</dbReference>
<dbReference type="InterPro" id="IPR027417">
    <property type="entry name" value="P-loop_NTPase"/>
</dbReference>
<dbReference type="InterPro" id="IPR020568">
    <property type="entry name" value="Ribosomal_Su5_D2-typ_SF"/>
</dbReference>
<dbReference type="InterPro" id="IPR014721">
    <property type="entry name" value="Ribsml_uS5_D2-typ_fold_subgr"/>
</dbReference>
<dbReference type="InterPro" id="IPR005225">
    <property type="entry name" value="Small_GTP-bd"/>
</dbReference>
<dbReference type="InterPro" id="IPR000795">
    <property type="entry name" value="T_Tr_GTP-bd_dom"/>
</dbReference>
<dbReference type="InterPro" id="IPR009000">
    <property type="entry name" value="Transl_B-barrel_sf"/>
</dbReference>
<dbReference type="InterPro" id="IPR004540">
    <property type="entry name" value="Transl_elong_EFG/EF2"/>
</dbReference>
<dbReference type="InterPro" id="IPR005517">
    <property type="entry name" value="Transl_elong_EFG/EF2_IV"/>
</dbReference>
<dbReference type="NCBIfam" id="TIGR00484">
    <property type="entry name" value="EF-G"/>
    <property type="match status" value="1"/>
</dbReference>
<dbReference type="NCBIfam" id="NF009381">
    <property type="entry name" value="PRK12740.1-5"/>
    <property type="match status" value="1"/>
</dbReference>
<dbReference type="NCBIfam" id="TIGR00231">
    <property type="entry name" value="small_GTP"/>
    <property type="match status" value="1"/>
</dbReference>
<dbReference type="PANTHER" id="PTHR43261:SF1">
    <property type="entry name" value="RIBOSOME-RELEASING FACTOR 2, MITOCHONDRIAL"/>
    <property type="match status" value="1"/>
</dbReference>
<dbReference type="PANTHER" id="PTHR43261">
    <property type="entry name" value="TRANSLATION ELONGATION FACTOR G-RELATED"/>
    <property type="match status" value="1"/>
</dbReference>
<dbReference type="Pfam" id="PF22042">
    <property type="entry name" value="EF-G_D2"/>
    <property type="match status" value="1"/>
</dbReference>
<dbReference type="Pfam" id="PF00679">
    <property type="entry name" value="EFG_C"/>
    <property type="match status" value="1"/>
</dbReference>
<dbReference type="Pfam" id="PF14492">
    <property type="entry name" value="EFG_III"/>
    <property type="match status" value="1"/>
</dbReference>
<dbReference type="Pfam" id="PF03764">
    <property type="entry name" value="EFG_IV"/>
    <property type="match status" value="1"/>
</dbReference>
<dbReference type="Pfam" id="PF00009">
    <property type="entry name" value="GTP_EFTU"/>
    <property type="match status" value="1"/>
</dbReference>
<dbReference type="PRINTS" id="PR00315">
    <property type="entry name" value="ELONGATNFCT"/>
</dbReference>
<dbReference type="SMART" id="SM00838">
    <property type="entry name" value="EFG_C"/>
    <property type="match status" value="1"/>
</dbReference>
<dbReference type="SMART" id="SM00889">
    <property type="entry name" value="EFG_IV"/>
    <property type="match status" value="1"/>
</dbReference>
<dbReference type="SUPFAM" id="SSF54980">
    <property type="entry name" value="EF-G C-terminal domain-like"/>
    <property type="match status" value="2"/>
</dbReference>
<dbReference type="SUPFAM" id="SSF52540">
    <property type="entry name" value="P-loop containing nucleoside triphosphate hydrolases"/>
    <property type="match status" value="1"/>
</dbReference>
<dbReference type="SUPFAM" id="SSF54211">
    <property type="entry name" value="Ribosomal protein S5 domain 2-like"/>
    <property type="match status" value="1"/>
</dbReference>
<dbReference type="SUPFAM" id="SSF50447">
    <property type="entry name" value="Translation proteins"/>
    <property type="match status" value="1"/>
</dbReference>
<dbReference type="PROSITE" id="PS00301">
    <property type="entry name" value="G_TR_1"/>
    <property type="match status" value="1"/>
</dbReference>
<dbReference type="PROSITE" id="PS51722">
    <property type="entry name" value="G_TR_2"/>
    <property type="match status" value="1"/>
</dbReference>
<evidence type="ECO:0000255" key="1">
    <source>
        <dbReference type="HAMAP-Rule" id="MF_00054"/>
    </source>
</evidence>
<accession>A6LPQ8</accession>
<comment type="function">
    <text evidence="1">Catalyzes the GTP-dependent ribosomal translocation step during translation elongation. During this step, the ribosome changes from the pre-translocational (PRE) to the post-translocational (POST) state as the newly formed A-site-bound peptidyl-tRNA and P-site-bound deacylated tRNA move to the P and E sites, respectively. Catalyzes the coordinated movement of the two tRNA molecules, the mRNA and conformational changes in the ribosome.</text>
</comment>
<comment type="subcellular location">
    <subcellularLocation>
        <location evidence="1">Cytoplasm</location>
    </subcellularLocation>
</comment>
<comment type="similarity">
    <text evidence="1">Belongs to the TRAFAC class translation factor GTPase superfamily. Classic translation factor GTPase family. EF-G/EF-2 subfamily.</text>
</comment>
<sequence length="688" mass="75866">MARKYPLDKFRNFGIMAHIDAGKTTTTERILFYTGVSHKIGEVHDGEATMDWMVQEQERGITITSAATSCFWKEHELNIIDTPGHVDFTVEVERSLRVLDGAVTVLDAKSGVEPQTETVWRQADKYGVPRMIYVNKMDATGADFFRCIQTVKDRLKANAVPIQIPVGSEQGFKGMVDLIKNVAFIFYDDLGKDMREEAIPAEYADQAEEYRAAMIEAIAETDEELMEKYLEGEELTIEELKAALRKATIANEIYPCICGSSYKNKGVQEMIDGVVDYLPSPLDVPAIKGTTLDGEEDHRNSSDSEPLSALAFKIATDPFVGKLAFTRIYSGVMQSGSYVLNSTKGKKERIGRLVKMHSNSRSEVESLEAGEIGAVIGLKNTTTGDTLCAENSPIILEAMEFPEPVIRVAIEPKTKDAQEKMGMALAKLAEEDPTFKTWTDTETGQTIIAGMGELHLEIIVDRLQREFKVECNVGAPQVAYKETIRSAVKAEAKYAKQSGGKGQYGHAVIEMEPTEGEYVFENAVVGGAIPKEYIPAIDAGIQEASKNGIIAGYNVINFKVKLVHGSYHEVDSSEMAFKIAGSMAFKNAMSKASPVLLEPMMKVEVTVPEEYMGDVIGDINSRRGIMEGMEALNGAQVIRAFVPLSEMFGYATTLRSRTQGRGVYSMVFDHYDEVPKNIQEQIAGSRAK</sequence>
<proteinExistence type="inferred from homology"/>
<protein>
    <recommendedName>
        <fullName evidence="1">Elongation factor G</fullName>
        <shortName evidence="1">EF-G</shortName>
    </recommendedName>
</protein>
<name>EFG_CLOB8</name>
<gene>
    <name evidence="1" type="primary">fusA</name>
    <name type="ordered locus">Cbei_0148</name>
</gene>
<feature type="chain" id="PRO_1000074952" description="Elongation factor G">
    <location>
        <begin position="1"/>
        <end position="688"/>
    </location>
</feature>
<feature type="domain" description="tr-type G">
    <location>
        <begin position="8"/>
        <end position="282"/>
    </location>
</feature>
<feature type="binding site" evidence="1">
    <location>
        <begin position="17"/>
        <end position="24"/>
    </location>
    <ligand>
        <name>GTP</name>
        <dbReference type="ChEBI" id="CHEBI:37565"/>
    </ligand>
</feature>
<feature type="binding site" evidence="1">
    <location>
        <begin position="81"/>
        <end position="85"/>
    </location>
    <ligand>
        <name>GTP</name>
        <dbReference type="ChEBI" id="CHEBI:37565"/>
    </ligand>
</feature>
<feature type="binding site" evidence="1">
    <location>
        <begin position="135"/>
        <end position="138"/>
    </location>
    <ligand>
        <name>GTP</name>
        <dbReference type="ChEBI" id="CHEBI:37565"/>
    </ligand>
</feature>
<reference key="1">
    <citation type="submission" date="2007-06" db="EMBL/GenBank/DDBJ databases">
        <title>Complete sequence of Clostridium beijerinckii NCIMB 8052.</title>
        <authorList>
            <consortium name="US DOE Joint Genome Institute"/>
            <person name="Copeland A."/>
            <person name="Lucas S."/>
            <person name="Lapidus A."/>
            <person name="Barry K."/>
            <person name="Detter J.C."/>
            <person name="Glavina del Rio T."/>
            <person name="Hammon N."/>
            <person name="Israni S."/>
            <person name="Dalin E."/>
            <person name="Tice H."/>
            <person name="Pitluck S."/>
            <person name="Sims D."/>
            <person name="Brettin T."/>
            <person name="Bruce D."/>
            <person name="Tapia R."/>
            <person name="Brainard J."/>
            <person name="Schmutz J."/>
            <person name="Larimer F."/>
            <person name="Land M."/>
            <person name="Hauser L."/>
            <person name="Kyrpides N."/>
            <person name="Mikhailova N."/>
            <person name="Bennet G."/>
            <person name="Cann I."/>
            <person name="Chen J.-S."/>
            <person name="Contreras A.L."/>
            <person name="Jones D."/>
            <person name="Kashket E."/>
            <person name="Mitchell W."/>
            <person name="Stoddard S."/>
            <person name="Schwarz W."/>
            <person name="Qureshi N."/>
            <person name="Young M."/>
            <person name="Shi Z."/>
            <person name="Ezeji T."/>
            <person name="White B."/>
            <person name="Blaschek H."/>
            <person name="Richardson P."/>
        </authorList>
    </citation>
    <scope>NUCLEOTIDE SEQUENCE [LARGE SCALE GENOMIC DNA]</scope>
    <source>
        <strain>ATCC 51743 / NCIMB 8052</strain>
    </source>
</reference>
<keyword id="KW-0963">Cytoplasm</keyword>
<keyword id="KW-0251">Elongation factor</keyword>
<keyword id="KW-0342">GTP-binding</keyword>
<keyword id="KW-0547">Nucleotide-binding</keyword>
<keyword id="KW-0648">Protein biosynthesis</keyword>
<organism>
    <name type="scientific">Clostridium beijerinckii (strain ATCC 51743 / NCIMB 8052)</name>
    <name type="common">Clostridium acetobutylicum</name>
    <dbReference type="NCBI Taxonomy" id="290402"/>
    <lineage>
        <taxon>Bacteria</taxon>
        <taxon>Bacillati</taxon>
        <taxon>Bacillota</taxon>
        <taxon>Clostridia</taxon>
        <taxon>Eubacteriales</taxon>
        <taxon>Clostridiaceae</taxon>
        <taxon>Clostridium</taxon>
    </lineage>
</organism>